<gene>
    <name evidence="1" type="primary">mutL</name>
    <name type="ordered locus">RPR_07700</name>
</gene>
<protein>
    <recommendedName>
        <fullName evidence="1">DNA mismatch repair protein MutL</fullName>
    </recommendedName>
</protein>
<accession>C4K2Y5</accession>
<evidence type="ECO:0000255" key="1">
    <source>
        <dbReference type="HAMAP-Rule" id="MF_00149"/>
    </source>
</evidence>
<proteinExistence type="inferred from homology"/>
<keyword id="KW-0227">DNA damage</keyword>
<keyword id="KW-0234">DNA repair</keyword>
<dbReference type="EMBL" id="CP001227">
    <property type="protein sequence ID" value="ACR47930.1"/>
    <property type="molecule type" value="Genomic_DNA"/>
</dbReference>
<dbReference type="RefSeq" id="WP_012737075.1">
    <property type="nucleotide sequence ID" value="NC_012730.1"/>
</dbReference>
<dbReference type="SMR" id="C4K2Y5"/>
<dbReference type="KEGG" id="rpk:RPR_07700"/>
<dbReference type="HOGENOM" id="CLU_004131_4_2_5"/>
<dbReference type="Proteomes" id="UP000005015">
    <property type="component" value="Chromosome"/>
</dbReference>
<dbReference type="GO" id="GO:0032300">
    <property type="term" value="C:mismatch repair complex"/>
    <property type="evidence" value="ECO:0007669"/>
    <property type="project" value="InterPro"/>
</dbReference>
<dbReference type="GO" id="GO:0005524">
    <property type="term" value="F:ATP binding"/>
    <property type="evidence" value="ECO:0007669"/>
    <property type="project" value="InterPro"/>
</dbReference>
<dbReference type="GO" id="GO:0016887">
    <property type="term" value="F:ATP hydrolysis activity"/>
    <property type="evidence" value="ECO:0007669"/>
    <property type="project" value="InterPro"/>
</dbReference>
<dbReference type="GO" id="GO:0140664">
    <property type="term" value="F:ATP-dependent DNA damage sensor activity"/>
    <property type="evidence" value="ECO:0007669"/>
    <property type="project" value="InterPro"/>
</dbReference>
<dbReference type="GO" id="GO:0030983">
    <property type="term" value="F:mismatched DNA binding"/>
    <property type="evidence" value="ECO:0007669"/>
    <property type="project" value="InterPro"/>
</dbReference>
<dbReference type="GO" id="GO:0006298">
    <property type="term" value="P:mismatch repair"/>
    <property type="evidence" value="ECO:0007669"/>
    <property type="project" value="UniProtKB-UniRule"/>
</dbReference>
<dbReference type="CDD" id="cd16926">
    <property type="entry name" value="HATPase_MutL-MLH-PMS-like"/>
    <property type="match status" value="1"/>
</dbReference>
<dbReference type="CDD" id="cd00782">
    <property type="entry name" value="MutL_Trans"/>
    <property type="match status" value="1"/>
</dbReference>
<dbReference type="FunFam" id="3.30.565.10:FF:000003">
    <property type="entry name" value="DNA mismatch repair endonuclease MutL"/>
    <property type="match status" value="1"/>
</dbReference>
<dbReference type="Gene3D" id="3.30.230.10">
    <property type="match status" value="1"/>
</dbReference>
<dbReference type="Gene3D" id="3.30.565.10">
    <property type="entry name" value="Histidine kinase-like ATPase, C-terminal domain"/>
    <property type="match status" value="1"/>
</dbReference>
<dbReference type="Gene3D" id="3.30.1540.20">
    <property type="entry name" value="MutL, C-terminal domain, dimerisation subdomain"/>
    <property type="match status" value="1"/>
</dbReference>
<dbReference type="Gene3D" id="3.30.1370.100">
    <property type="entry name" value="MutL, C-terminal domain, regulatory subdomain"/>
    <property type="match status" value="1"/>
</dbReference>
<dbReference type="HAMAP" id="MF_00149">
    <property type="entry name" value="DNA_mis_repair"/>
    <property type="match status" value="1"/>
</dbReference>
<dbReference type="InterPro" id="IPR014762">
    <property type="entry name" value="DNA_mismatch_repair_CS"/>
</dbReference>
<dbReference type="InterPro" id="IPR020667">
    <property type="entry name" value="DNA_mismatch_repair_MutL"/>
</dbReference>
<dbReference type="InterPro" id="IPR013507">
    <property type="entry name" value="DNA_mismatch_S5_2-like"/>
</dbReference>
<dbReference type="InterPro" id="IPR036890">
    <property type="entry name" value="HATPase_C_sf"/>
</dbReference>
<dbReference type="InterPro" id="IPR002099">
    <property type="entry name" value="MutL/Mlh/PMS"/>
</dbReference>
<dbReference type="InterPro" id="IPR038973">
    <property type="entry name" value="MutL/Mlh/Pms-like"/>
</dbReference>
<dbReference type="InterPro" id="IPR014790">
    <property type="entry name" value="MutL_C"/>
</dbReference>
<dbReference type="InterPro" id="IPR042120">
    <property type="entry name" value="MutL_C_dimsub"/>
</dbReference>
<dbReference type="InterPro" id="IPR042121">
    <property type="entry name" value="MutL_C_regsub"/>
</dbReference>
<dbReference type="InterPro" id="IPR037198">
    <property type="entry name" value="MutL_C_sf"/>
</dbReference>
<dbReference type="InterPro" id="IPR020568">
    <property type="entry name" value="Ribosomal_Su5_D2-typ_SF"/>
</dbReference>
<dbReference type="InterPro" id="IPR014721">
    <property type="entry name" value="Ribsml_uS5_D2-typ_fold_subgr"/>
</dbReference>
<dbReference type="NCBIfam" id="TIGR00585">
    <property type="entry name" value="mutl"/>
    <property type="match status" value="1"/>
</dbReference>
<dbReference type="NCBIfam" id="NF000952">
    <property type="entry name" value="PRK00095.2-2"/>
    <property type="match status" value="1"/>
</dbReference>
<dbReference type="NCBIfam" id="NF000953">
    <property type="entry name" value="PRK00095.2-4"/>
    <property type="match status" value="1"/>
</dbReference>
<dbReference type="PANTHER" id="PTHR10073">
    <property type="entry name" value="DNA MISMATCH REPAIR PROTEIN MLH, PMS, MUTL"/>
    <property type="match status" value="1"/>
</dbReference>
<dbReference type="PANTHER" id="PTHR10073:SF12">
    <property type="entry name" value="DNA MISMATCH REPAIR PROTEIN MLH1"/>
    <property type="match status" value="1"/>
</dbReference>
<dbReference type="Pfam" id="PF01119">
    <property type="entry name" value="DNA_mis_repair"/>
    <property type="match status" value="1"/>
</dbReference>
<dbReference type="Pfam" id="PF13589">
    <property type="entry name" value="HATPase_c_3"/>
    <property type="match status" value="1"/>
</dbReference>
<dbReference type="Pfam" id="PF08676">
    <property type="entry name" value="MutL_C"/>
    <property type="match status" value="1"/>
</dbReference>
<dbReference type="SMART" id="SM01340">
    <property type="entry name" value="DNA_mis_repair"/>
    <property type="match status" value="1"/>
</dbReference>
<dbReference type="SMART" id="SM00853">
    <property type="entry name" value="MutL_C"/>
    <property type="match status" value="1"/>
</dbReference>
<dbReference type="SUPFAM" id="SSF55874">
    <property type="entry name" value="ATPase domain of HSP90 chaperone/DNA topoisomerase II/histidine kinase"/>
    <property type="match status" value="1"/>
</dbReference>
<dbReference type="SUPFAM" id="SSF118116">
    <property type="entry name" value="DNA mismatch repair protein MutL"/>
    <property type="match status" value="1"/>
</dbReference>
<dbReference type="SUPFAM" id="SSF54211">
    <property type="entry name" value="Ribosomal protein S5 domain 2-like"/>
    <property type="match status" value="1"/>
</dbReference>
<dbReference type="PROSITE" id="PS00058">
    <property type="entry name" value="DNA_MISMATCH_REPAIR_1"/>
    <property type="match status" value="1"/>
</dbReference>
<sequence>MTIKFLSESTINRIAAGEVIERPASVVKELVENAVDASSTKIDIILERAGKNLIIISDDGIGMTDKELEIAVERHTTSKFDESDFLNINTFGFRGEALPSIAAISKMLITSKKRDADKAFQIKLIGGNEKQVTISVHNEGTKIEIRDLFFATPARLKFLRADKTELAATVGVVKKIALAHPKISLSLTHDGKNLLKLKGQNKDAETNLKQRIIDVIGDDFIKNAAYIDFKTPDFSICGYTSSPTYNRASSEDQFLFINNRPVKDKLLQVALRVAYQDYLARDRYPICAIFLQINPQLVDVNVHPAKAEVRFHDPNYVRNLLIEAIKNALTNKSHVTSTTIASDALELFKNPLVNKQSPVSKVINVNSKSADYRPTTHSTLNTVPQNHVCQKLIDTLSHAKIEQEVENHIEHEQQTRKQYKLGAAKAQLHTTYIISQTEDSIVITDQHAAHERLGYEKIKDYLKTEELIKQRLLIPEIVELPNEKKADCLYDHREKLYKLGLTLEKFGEKSIIVTEIPNILGDVNVQKLIQDLADHLSDFGKNIALTELIEHVTETYACHYSIRAGRKLSADEMNALLRQMENTPLSGQCNHGRPTYIELKLKDIERLFGR</sequence>
<feature type="chain" id="PRO_1000203397" description="DNA mismatch repair protein MutL">
    <location>
        <begin position="1"/>
        <end position="610"/>
    </location>
</feature>
<comment type="function">
    <text evidence="1">This protein is involved in the repair of mismatches in DNA. It is required for dam-dependent methyl-directed DNA mismatch repair. May act as a 'molecular matchmaker', a protein that promotes the formation of a stable complex between two or more DNA-binding proteins in an ATP-dependent manner without itself being part of a final effector complex.</text>
</comment>
<comment type="similarity">
    <text evidence="1">Belongs to the DNA mismatch repair MutL/HexB family.</text>
</comment>
<reference key="1">
    <citation type="journal article" date="2009" name="PLoS ONE">
        <title>Genome sequence of the endosymbiont Rickettsia peacockii and comparison with virulent Rickettsia rickettsii: identification of virulence factors.</title>
        <authorList>
            <person name="Felsheim R.F."/>
            <person name="Kurtti T.J."/>
            <person name="Munderloh U.G."/>
        </authorList>
    </citation>
    <scope>NUCLEOTIDE SEQUENCE [LARGE SCALE GENOMIC DNA]</scope>
    <source>
        <strain>Rustic</strain>
    </source>
</reference>
<name>MUTL_RICPU</name>
<organism>
    <name type="scientific">Rickettsia peacockii (strain Rustic)</name>
    <dbReference type="NCBI Taxonomy" id="562019"/>
    <lineage>
        <taxon>Bacteria</taxon>
        <taxon>Pseudomonadati</taxon>
        <taxon>Pseudomonadota</taxon>
        <taxon>Alphaproteobacteria</taxon>
        <taxon>Rickettsiales</taxon>
        <taxon>Rickettsiaceae</taxon>
        <taxon>Rickettsieae</taxon>
        <taxon>Rickettsia</taxon>
        <taxon>spotted fever group</taxon>
    </lineage>
</organism>